<name>OPSL1_ARATH</name>
<accession>Q9LFB9</accession>
<accession>Q84W52</accession>
<comment type="function">
    <text evidence="3">Potentiates primary root protophloem differentiation. Regulates roots architecture.</text>
</comment>
<comment type="subcellular location">
    <subcellularLocation>
        <location evidence="1">Cell membrane</location>
        <topology evidence="1">Peripheral membrane protein</topology>
        <orientation evidence="1">Cytoplasmic side</orientation>
    </subcellularLocation>
    <subcellularLocation>
        <location evidence="1">Cytoplasm</location>
    </subcellularLocation>
</comment>
<comment type="PTM">
    <text evidence="1">Phosphorylation at Ser-260 amplifies the promotion of protophloem differentiation.</text>
</comment>
<comment type="miscellaneous">
    <text evidence="3">Can complement the protophloem differentiation defect phenotypes of ops, brx and brx ops mutants.</text>
</comment>
<comment type="similarity">
    <text evidence="5">Belongs to the OCTOPUS family.</text>
</comment>
<organism>
    <name type="scientific">Arabidopsis thaliana</name>
    <name type="common">Mouse-ear cress</name>
    <dbReference type="NCBI Taxonomy" id="3702"/>
    <lineage>
        <taxon>Eukaryota</taxon>
        <taxon>Viridiplantae</taxon>
        <taxon>Streptophyta</taxon>
        <taxon>Embryophyta</taxon>
        <taxon>Tracheophyta</taxon>
        <taxon>Spermatophyta</taxon>
        <taxon>Magnoliopsida</taxon>
        <taxon>eudicotyledons</taxon>
        <taxon>Gunneridae</taxon>
        <taxon>Pentapetalae</taxon>
        <taxon>rosids</taxon>
        <taxon>malvids</taxon>
        <taxon>Brassicales</taxon>
        <taxon>Brassicaceae</taxon>
        <taxon>Camelineae</taxon>
        <taxon>Arabidopsis</taxon>
    </lineage>
</organism>
<reference key="1">
    <citation type="journal article" date="2000" name="Nature">
        <title>Sequence and analysis of chromosome 5 of the plant Arabidopsis thaliana.</title>
        <authorList>
            <person name="Tabata S."/>
            <person name="Kaneko T."/>
            <person name="Nakamura Y."/>
            <person name="Kotani H."/>
            <person name="Kato T."/>
            <person name="Asamizu E."/>
            <person name="Miyajima N."/>
            <person name="Sasamoto S."/>
            <person name="Kimura T."/>
            <person name="Hosouchi T."/>
            <person name="Kawashima K."/>
            <person name="Kohara M."/>
            <person name="Matsumoto M."/>
            <person name="Matsuno A."/>
            <person name="Muraki A."/>
            <person name="Nakayama S."/>
            <person name="Nakazaki N."/>
            <person name="Naruo K."/>
            <person name="Okumura S."/>
            <person name="Shinpo S."/>
            <person name="Takeuchi C."/>
            <person name="Wada T."/>
            <person name="Watanabe A."/>
            <person name="Yamada M."/>
            <person name="Yasuda M."/>
            <person name="Sato S."/>
            <person name="de la Bastide M."/>
            <person name="Huang E."/>
            <person name="Spiegel L."/>
            <person name="Gnoj L."/>
            <person name="O'Shaughnessy A."/>
            <person name="Preston R."/>
            <person name="Habermann K."/>
            <person name="Murray J."/>
            <person name="Johnson D."/>
            <person name="Rohlfing T."/>
            <person name="Nelson J."/>
            <person name="Stoneking T."/>
            <person name="Pepin K."/>
            <person name="Spieth J."/>
            <person name="Sekhon M."/>
            <person name="Armstrong J."/>
            <person name="Becker M."/>
            <person name="Belter E."/>
            <person name="Cordum H."/>
            <person name="Cordes M."/>
            <person name="Courtney L."/>
            <person name="Courtney W."/>
            <person name="Dante M."/>
            <person name="Du H."/>
            <person name="Edwards J."/>
            <person name="Fryman J."/>
            <person name="Haakensen B."/>
            <person name="Lamar E."/>
            <person name="Latreille P."/>
            <person name="Leonard S."/>
            <person name="Meyer R."/>
            <person name="Mulvaney E."/>
            <person name="Ozersky P."/>
            <person name="Riley A."/>
            <person name="Strowmatt C."/>
            <person name="Wagner-McPherson C."/>
            <person name="Wollam A."/>
            <person name="Yoakum M."/>
            <person name="Bell M."/>
            <person name="Dedhia N."/>
            <person name="Parnell L."/>
            <person name="Shah R."/>
            <person name="Rodriguez M."/>
            <person name="Hoon See L."/>
            <person name="Vil D."/>
            <person name="Baker J."/>
            <person name="Kirchoff K."/>
            <person name="Toth K."/>
            <person name="King L."/>
            <person name="Bahret A."/>
            <person name="Miller B."/>
            <person name="Marra M.A."/>
            <person name="Martienssen R."/>
            <person name="McCombie W.R."/>
            <person name="Wilson R.K."/>
            <person name="Murphy G."/>
            <person name="Bancroft I."/>
            <person name="Volckaert G."/>
            <person name="Wambutt R."/>
            <person name="Duesterhoeft A."/>
            <person name="Stiekema W."/>
            <person name="Pohl T."/>
            <person name="Entian K.-D."/>
            <person name="Terryn N."/>
            <person name="Hartley N."/>
            <person name="Bent E."/>
            <person name="Johnson S."/>
            <person name="Langham S.-A."/>
            <person name="McCullagh B."/>
            <person name="Robben J."/>
            <person name="Grymonprez B."/>
            <person name="Zimmermann W."/>
            <person name="Ramsperger U."/>
            <person name="Wedler H."/>
            <person name="Balke K."/>
            <person name="Wedler E."/>
            <person name="Peters S."/>
            <person name="van Staveren M."/>
            <person name="Dirkse W."/>
            <person name="Mooijman P."/>
            <person name="Klein Lankhorst R."/>
            <person name="Weitzenegger T."/>
            <person name="Bothe G."/>
            <person name="Rose M."/>
            <person name="Hauf J."/>
            <person name="Berneiser S."/>
            <person name="Hempel S."/>
            <person name="Feldpausch M."/>
            <person name="Lamberth S."/>
            <person name="Villarroel R."/>
            <person name="Gielen J."/>
            <person name="Ardiles W."/>
            <person name="Bents O."/>
            <person name="Lemcke K."/>
            <person name="Kolesov G."/>
            <person name="Mayer K.F.X."/>
            <person name="Rudd S."/>
            <person name="Schoof H."/>
            <person name="Schueller C."/>
            <person name="Zaccaria P."/>
            <person name="Mewes H.-W."/>
            <person name="Bevan M."/>
            <person name="Fransz P.F."/>
        </authorList>
    </citation>
    <scope>NUCLEOTIDE SEQUENCE [LARGE SCALE GENOMIC DNA]</scope>
    <source>
        <strain>cv. Columbia</strain>
    </source>
</reference>
<reference key="2">
    <citation type="journal article" date="2017" name="Plant J.">
        <title>Araport11: a complete reannotation of the Arabidopsis thaliana reference genome.</title>
        <authorList>
            <person name="Cheng C.Y."/>
            <person name="Krishnakumar V."/>
            <person name="Chan A.P."/>
            <person name="Thibaud-Nissen F."/>
            <person name="Schobel S."/>
            <person name="Town C.D."/>
        </authorList>
    </citation>
    <scope>GENOME REANNOTATION</scope>
    <source>
        <strain>cv. Columbia</strain>
    </source>
</reference>
<reference key="3">
    <citation type="journal article" date="2003" name="Science">
        <title>Empirical analysis of transcriptional activity in the Arabidopsis genome.</title>
        <authorList>
            <person name="Yamada K."/>
            <person name="Lim J."/>
            <person name="Dale J.M."/>
            <person name="Chen H."/>
            <person name="Shinn P."/>
            <person name="Palm C.J."/>
            <person name="Southwick A.M."/>
            <person name="Wu H.C."/>
            <person name="Kim C.J."/>
            <person name="Nguyen M."/>
            <person name="Pham P.K."/>
            <person name="Cheuk R.F."/>
            <person name="Karlin-Newmann G."/>
            <person name="Liu S.X."/>
            <person name="Lam B."/>
            <person name="Sakano H."/>
            <person name="Wu T."/>
            <person name="Yu G."/>
            <person name="Miranda M."/>
            <person name="Quach H.L."/>
            <person name="Tripp M."/>
            <person name="Chang C.H."/>
            <person name="Lee J.M."/>
            <person name="Toriumi M.J."/>
            <person name="Chan M.M."/>
            <person name="Tang C.C."/>
            <person name="Onodera C.S."/>
            <person name="Deng J.M."/>
            <person name="Akiyama K."/>
            <person name="Ansari Y."/>
            <person name="Arakawa T."/>
            <person name="Banh J."/>
            <person name="Banno F."/>
            <person name="Bowser L."/>
            <person name="Brooks S.Y."/>
            <person name="Carninci P."/>
            <person name="Chao Q."/>
            <person name="Choy N."/>
            <person name="Enju A."/>
            <person name="Goldsmith A.D."/>
            <person name="Gurjal M."/>
            <person name="Hansen N.F."/>
            <person name="Hayashizaki Y."/>
            <person name="Johnson-Hopson C."/>
            <person name="Hsuan V.W."/>
            <person name="Iida K."/>
            <person name="Karnes M."/>
            <person name="Khan S."/>
            <person name="Koesema E."/>
            <person name="Ishida J."/>
            <person name="Jiang P.X."/>
            <person name="Jones T."/>
            <person name="Kawai J."/>
            <person name="Kamiya A."/>
            <person name="Meyers C."/>
            <person name="Nakajima M."/>
            <person name="Narusaka M."/>
            <person name="Seki M."/>
            <person name="Sakurai T."/>
            <person name="Satou M."/>
            <person name="Tamse R."/>
            <person name="Vaysberg M."/>
            <person name="Wallender E.K."/>
            <person name="Wong C."/>
            <person name="Yamamura Y."/>
            <person name="Yuan S."/>
            <person name="Shinozaki K."/>
            <person name="Davis R.W."/>
            <person name="Theologis A."/>
            <person name="Ecker J.R."/>
        </authorList>
    </citation>
    <scope>NUCLEOTIDE SEQUENCE [LARGE SCALE MRNA]</scope>
    <source>
        <strain>cv. Columbia</strain>
    </source>
</reference>
<reference key="4">
    <citation type="submission" date="2004-10" db="EMBL/GenBank/DDBJ databases">
        <title>Arabidopsis ORF clones.</title>
        <authorList>
            <person name="Cheuk R.F."/>
            <person name="Chen H."/>
            <person name="Kim C.J."/>
            <person name="Shinn P."/>
            <person name="Ecker J.R."/>
        </authorList>
    </citation>
    <scope>NUCLEOTIDE SEQUENCE [LARGE SCALE MRNA]</scope>
    <source>
        <strain>cv. Columbia</strain>
    </source>
</reference>
<reference key="5">
    <citation type="journal article" date="2017" name="Proc. Natl. Acad. Sci. U.S.A.">
        <title>Phosphosite charge rather than shootward localization determines OCTOPUS activity in root protophloem.</title>
        <authorList>
            <person name="Breda A.S."/>
            <person name="Hazak O."/>
            <person name="Hardtke C.S."/>
        </authorList>
    </citation>
    <scope>FUNCTION</scope>
    <source>
        <strain>cv. Columbia</strain>
    </source>
</reference>
<evidence type="ECO:0000250" key="1">
    <source>
        <dbReference type="UniProtKB" id="Q9SS80"/>
    </source>
</evidence>
<evidence type="ECO:0000256" key="2">
    <source>
        <dbReference type="SAM" id="MobiDB-lite"/>
    </source>
</evidence>
<evidence type="ECO:0000269" key="3">
    <source>
    </source>
</evidence>
<evidence type="ECO:0000303" key="4">
    <source>
    </source>
</evidence>
<evidence type="ECO:0000305" key="5"/>
<evidence type="ECO:0000312" key="6">
    <source>
        <dbReference type="Araport" id="AT5G01170"/>
    </source>
</evidence>
<evidence type="ECO:0000312" key="7">
    <source>
        <dbReference type="EMBL" id="CAB69845.1"/>
    </source>
</evidence>
<dbReference type="EMBL" id="AL137189">
    <property type="protein sequence ID" value="CAB69845.1"/>
    <property type="molecule type" value="Genomic_DNA"/>
</dbReference>
<dbReference type="EMBL" id="CP002688">
    <property type="protein sequence ID" value="AED90306.1"/>
    <property type="molecule type" value="Genomic_DNA"/>
</dbReference>
<dbReference type="EMBL" id="BT004217">
    <property type="protein sequence ID" value="AAO42234.1"/>
    <property type="molecule type" value="mRNA"/>
</dbReference>
<dbReference type="EMBL" id="BT015922">
    <property type="protein sequence ID" value="AAU95458.1"/>
    <property type="molecule type" value="mRNA"/>
</dbReference>
<dbReference type="PIR" id="T45957">
    <property type="entry name" value="T45957"/>
</dbReference>
<dbReference type="RefSeq" id="NP_195737.1">
    <property type="nucleotide sequence ID" value="NM_120195.3"/>
</dbReference>
<dbReference type="FunCoup" id="Q9LFB9">
    <property type="interactions" value="55"/>
</dbReference>
<dbReference type="STRING" id="3702.Q9LFB9"/>
<dbReference type="iPTMnet" id="Q9LFB9"/>
<dbReference type="PaxDb" id="3702-AT5G01170.1"/>
<dbReference type="ProteomicsDB" id="248762"/>
<dbReference type="EnsemblPlants" id="AT5G01170.1">
    <property type="protein sequence ID" value="AT5G01170.1"/>
    <property type="gene ID" value="AT5G01170"/>
</dbReference>
<dbReference type="GeneID" id="831732"/>
<dbReference type="Gramene" id="AT5G01170.1">
    <property type="protein sequence ID" value="AT5G01170.1"/>
    <property type="gene ID" value="AT5G01170"/>
</dbReference>
<dbReference type="KEGG" id="ath:AT5G01170"/>
<dbReference type="Araport" id="AT5G01170"/>
<dbReference type="TAIR" id="AT5G01170">
    <property type="gene designation" value="OPL1"/>
</dbReference>
<dbReference type="eggNOG" id="ENOG502QR95">
    <property type="taxonomic scope" value="Eukaryota"/>
</dbReference>
<dbReference type="HOGENOM" id="CLU_021226_0_0_1"/>
<dbReference type="InParanoid" id="Q9LFB9"/>
<dbReference type="OMA" id="MKDYMDL"/>
<dbReference type="PhylomeDB" id="Q9LFB9"/>
<dbReference type="PRO" id="PR:Q9LFB9"/>
<dbReference type="Proteomes" id="UP000006548">
    <property type="component" value="Chromosome 5"/>
</dbReference>
<dbReference type="ExpressionAtlas" id="Q9LFB9">
    <property type="expression patterns" value="baseline and differential"/>
</dbReference>
<dbReference type="GO" id="GO:0005737">
    <property type="term" value="C:cytoplasm"/>
    <property type="evidence" value="ECO:0007669"/>
    <property type="project" value="UniProtKB-SubCell"/>
</dbReference>
<dbReference type="GO" id="GO:0005886">
    <property type="term" value="C:plasma membrane"/>
    <property type="evidence" value="ECO:0007669"/>
    <property type="project" value="UniProtKB-SubCell"/>
</dbReference>
<dbReference type="GO" id="GO:0030154">
    <property type="term" value="P:cell differentiation"/>
    <property type="evidence" value="ECO:0007669"/>
    <property type="project" value="UniProtKB-KW"/>
</dbReference>
<dbReference type="GO" id="GO:0010088">
    <property type="term" value="P:phloem development"/>
    <property type="evidence" value="ECO:0000315"/>
    <property type="project" value="UniProtKB"/>
</dbReference>
<dbReference type="GO" id="GO:2000280">
    <property type="term" value="P:regulation of root development"/>
    <property type="evidence" value="ECO:0000315"/>
    <property type="project" value="UniProtKB"/>
</dbReference>
<dbReference type="InterPro" id="IPR008004">
    <property type="entry name" value="OCTOPUS-like"/>
</dbReference>
<dbReference type="PANTHER" id="PTHR31659:SF20">
    <property type="entry name" value="PROTEIN OCTOPUS-LIKE"/>
    <property type="match status" value="1"/>
</dbReference>
<dbReference type="PANTHER" id="PTHR31659">
    <property type="entry name" value="PROTEIN: UPF0503-LIKE PROTEIN, PUTATIVE (DUF740)-RELATED"/>
    <property type="match status" value="1"/>
</dbReference>
<dbReference type="Pfam" id="PF05340">
    <property type="entry name" value="DUF740"/>
    <property type="match status" value="3"/>
</dbReference>
<keyword id="KW-1003">Cell membrane</keyword>
<keyword id="KW-0963">Cytoplasm</keyword>
<keyword id="KW-0217">Developmental protein</keyword>
<keyword id="KW-0221">Differentiation</keyword>
<keyword id="KW-0472">Membrane</keyword>
<keyword id="KW-0597">Phosphoprotein</keyword>
<keyword id="KW-1185">Reference proteome</keyword>
<protein>
    <recommendedName>
        <fullName evidence="4">Protein OCTOPUS-like</fullName>
        <shortName evidence="4">AtOPSL1</shortName>
    </recommendedName>
</protein>
<gene>
    <name evidence="4" type="primary">OPSL1</name>
    <name evidence="6" type="ordered locus">At5g01170</name>
    <name evidence="7" type="ORF">F7J8.150</name>
</gene>
<proteinExistence type="evidence at transcript level"/>
<feature type="chain" id="PRO_0000445682" description="Protein OCTOPUS-like">
    <location>
        <begin position="1"/>
        <end position="568"/>
    </location>
</feature>
<feature type="region of interest" description="Disordered" evidence="2">
    <location>
        <begin position="1"/>
        <end position="27"/>
    </location>
</feature>
<feature type="region of interest" description="Disordered" evidence="2">
    <location>
        <begin position="78"/>
        <end position="99"/>
    </location>
</feature>
<feature type="region of interest" description="Disordered" evidence="2">
    <location>
        <begin position="168"/>
        <end position="203"/>
    </location>
</feature>
<feature type="region of interest" description="Disordered" evidence="2">
    <location>
        <begin position="242"/>
        <end position="276"/>
    </location>
</feature>
<feature type="region of interest" description="Disordered" evidence="2">
    <location>
        <begin position="360"/>
        <end position="428"/>
    </location>
</feature>
<feature type="region of interest" description="Disordered" evidence="2">
    <location>
        <begin position="446"/>
        <end position="512"/>
    </location>
</feature>
<feature type="region of interest" description="Disordered" evidence="2">
    <location>
        <begin position="526"/>
        <end position="558"/>
    </location>
</feature>
<feature type="compositionally biased region" description="Low complexity" evidence="2">
    <location>
        <begin position="82"/>
        <end position="93"/>
    </location>
</feature>
<feature type="compositionally biased region" description="Acidic residues" evidence="2">
    <location>
        <begin position="168"/>
        <end position="179"/>
    </location>
</feature>
<feature type="compositionally biased region" description="Basic and acidic residues" evidence="2">
    <location>
        <begin position="180"/>
        <end position="193"/>
    </location>
</feature>
<feature type="compositionally biased region" description="Polar residues" evidence="2">
    <location>
        <begin position="400"/>
        <end position="423"/>
    </location>
</feature>
<feature type="compositionally biased region" description="Gly residues" evidence="2">
    <location>
        <begin position="532"/>
        <end position="546"/>
    </location>
</feature>
<feature type="modified residue" description="Phosphoserine" evidence="1">
    <location>
        <position position="260"/>
    </location>
</feature>
<feature type="sequence conflict" description="In Ref. 3; AAO42234." evidence="5" ref="3">
    <original>S</original>
    <variation>C</variation>
    <location>
        <position position="435"/>
    </location>
</feature>
<feature type="sequence conflict" description="In Ref. 3; AAO42234." evidence="5" ref="3">
    <original>M</original>
    <variation>V</variation>
    <location>
        <position position="516"/>
    </location>
</feature>
<sequence>MNLSADQAPVTAVDELAPPSQPHRLSTSCDLHPEERFSGFCPSCLCDRLSVLDHNAAPPPSSSSRKPPSISAVSLKALFKPSSSGTNNSNGNGRVRPGFFPELRRTKSFSAKNNEGFSGGFEPQRRSCDVRLRDDERNLPINEAASVDKIEEEARESSVSEIVLEVTEEAEIEEDEENGEKDPGEIVEEKSSEIGEEEEELKPMKDYMDLYSQTKKPSVKDFAGSFFSAASVFSKKLQKWKQKQKVKKPRNGVGGGRPQSEIGVGRRSSDTDPRFSLDAGRFSVDIGRISMDDSRYSLDEPRASWDGHLIGRTTAARVPLPPSMLSVVENAPLNRSDMQIPSSPSIKPISGDSDPIIIIPGGSNQTRDYYTGPPSSRRRKSLDRSNSIRKIVTELEDVKSVSNSTTTIDSNSMETAENKGNQNGDKKSRRWGKWSILGFIYRKGKDDEEEDRYSRSNSAGMVERSLSESWPEMRNGEGGGPKMRRSNSNVSWRSSGGGSARNKSSRYSSKDGENGMLRFYLTPMRRSWKTSGGSGGGGGGGGGGGWEKTAAKANSHGHSIARRVMRLY</sequence>